<accession>Q2NT68</accession>
<name>YCIB_SODGM</name>
<comment type="function">
    <text evidence="1">Plays a role in cell envelope biogenesis, maintenance of cell envelope integrity and membrane homeostasis.</text>
</comment>
<comment type="subcellular location">
    <subcellularLocation>
        <location evidence="1">Cell inner membrane</location>
        <topology evidence="1">Multi-pass membrane protein</topology>
    </subcellularLocation>
</comment>
<comment type="similarity">
    <text evidence="1">Belongs to the YciB family.</text>
</comment>
<keyword id="KW-0997">Cell inner membrane</keyword>
<keyword id="KW-1003">Cell membrane</keyword>
<keyword id="KW-0472">Membrane</keyword>
<keyword id="KW-0812">Transmembrane</keyword>
<keyword id="KW-1133">Transmembrane helix</keyword>
<gene>
    <name evidence="1" type="primary">yciB</name>
    <name type="ordered locus">SG1382</name>
</gene>
<dbReference type="EMBL" id="AP008232">
    <property type="protein sequence ID" value="BAE74657.1"/>
    <property type="molecule type" value="Genomic_DNA"/>
</dbReference>
<dbReference type="RefSeq" id="WP_011411202.1">
    <property type="nucleotide sequence ID" value="NC_007712.1"/>
</dbReference>
<dbReference type="STRING" id="343509.SG1382"/>
<dbReference type="KEGG" id="sgl:SG1382"/>
<dbReference type="eggNOG" id="COG2917">
    <property type="taxonomic scope" value="Bacteria"/>
</dbReference>
<dbReference type="HOGENOM" id="CLU_089554_2_0_6"/>
<dbReference type="OrthoDB" id="9788219at2"/>
<dbReference type="BioCyc" id="SGLO343509:SGP1_RS12115-MONOMER"/>
<dbReference type="Proteomes" id="UP000001932">
    <property type="component" value="Chromosome"/>
</dbReference>
<dbReference type="GO" id="GO:0005886">
    <property type="term" value="C:plasma membrane"/>
    <property type="evidence" value="ECO:0007669"/>
    <property type="project" value="UniProtKB-SubCell"/>
</dbReference>
<dbReference type="HAMAP" id="MF_00189">
    <property type="entry name" value="YciB"/>
    <property type="match status" value="1"/>
</dbReference>
<dbReference type="InterPro" id="IPR006008">
    <property type="entry name" value="YciB"/>
</dbReference>
<dbReference type="NCBIfam" id="TIGR00997">
    <property type="entry name" value="ispZ"/>
    <property type="match status" value="1"/>
</dbReference>
<dbReference type="NCBIfam" id="NF001324">
    <property type="entry name" value="PRK00259.1-2"/>
    <property type="match status" value="1"/>
</dbReference>
<dbReference type="NCBIfam" id="NF001325">
    <property type="entry name" value="PRK00259.1-3"/>
    <property type="match status" value="1"/>
</dbReference>
<dbReference type="NCBIfam" id="NF001326">
    <property type="entry name" value="PRK00259.1-4"/>
    <property type="match status" value="1"/>
</dbReference>
<dbReference type="PANTHER" id="PTHR36917:SF1">
    <property type="entry name" value="INNER MEMBRANE-SPANNING PROTEIN YCIB"/>
    <property type="match status" value="1"/>
</dbReference>
<dbReference type="PANTHER" id="PTHR36917">
    <property type="entry name" value="INTRACELLULAR SEPTATION PROTEIN A-RELATED"/>
    <property type="match status" value="1"/>
</dbReference>
<dbReference type="Pfam" id="PF04279">
    <property type="entry name" value="IspA"/>
    <property type="match status" value="1"/>
</dbReference>
<sequence>MKQFLDFLPLVVFFIVYNLYDIYYASGALIVASALVLVYTWLRYRKVEKVALITFVLVAIFGSLTLYYHNAEFIKWKVTVIYSLFAAALLISQFVFGKPLIQRMLDKEIHLPARVWNNLNIAWALFFLACGAANIYIAFWLPQSVWVNFKVFGLTGLTLVFTLLSGIYIYRYNNTH</sequence>
<protein>
    <recommendedName>
        <fullName evidence="1">Inner membrane-spanning protein YciB</fullName>
    </recommendedName>
</protein>
<evidence type="ECO:0000255" key="1">
    <source>
        <dbReference type="HAMAP-Rule" id="MF_00189"/>
    </source>
</evidence>
<reference key="1">
    <citation type="journal article" date="2006" name="Genome Res.">
        <title>Massive genome erosion and functional adaptations provide insights into the symbiotic lifestyle of Sodalis glossinidius in the tsetse host.</title>
        <authorList>
            <person name="Toh H."/>
            <person name="Weiss B.L."/>
            <person name="Perkin S.A.H."/>
            <person name="Yamashita A."/>
            <person name="Oshima K."/>
            <person name="Hattori M."/>
            <person name="Aksoy S."/>
        </authorList>
    </citation>
    <scope>NUCLEOTIDE SEQUENCE [LARGE SCALE GENOMIC DNA]</scope>
    <source>
        <strain>morsitans</strain>
    </source>
</reference>
<organism>
    <name type="scientific">Sodalis glossinidius (strain morsitans)</name>
    <dbReference type="NCBI Taxonomy" id="343509"/>
    <lineage>
        <taxon>Bacteria</taxon>
        <taxon>Pseudomonadati</taxon>
        <taxon>Pseudomonadota</taxon>
        <taxon>Gammaproteobacteria</taxon>
        <taxon>Enterobacterales</taxon>
        <taxon>Bruguierivoracaceae</taxon>
        <taxon>Sodalis</taxon>
    </lineage>
</organism>
<feature type="chain" id="PRO_1000021069" description="Inner membrane-spanning protein YciB">
    <location>
        <begin position="1"/>
        <end position="176"/>
    </location>
</feature>
<feature type="transmembrane region" description="Helical" evidence="1">
    <location>
        <begin position="22"/>
        <end position="42"/>
    </location>
</feature>
<feature type="transmembrane region" description="Helical" evidence="1">
    <location>
        <begin position="50"/>
        <end position="70"/>
    </location>
</feature>
<feature type="transmembrane region" description="Helical" evidence="1">
    <location>
        <begin position="81"/>
        <end position="101"/>
    </location>
</feature>
<feature type="transmembrane region" description="Helical" evidence="1">
    <location>
        <begin position="121"/>
        <end position="141"/>
    </location>
</feature>
<feature type="transmembrane region" description="Helical" evidence="1">
    <location>
        <begin position="149"/>
        <end position="169"/>
    </location>
</feature>
<proteinExistence type="inferred from homology"/>